<reference key="1">
    <citation type="journal article" date="1972" name="Hoppe-Seyler's Z. Physiol. Chem.">
        <title>Thynnin, the protamine of tuna fish. Complete amino acid sequence of thynnin Y2. XI. Report on the structure of protamines described by E. Waldschmidt-Leitz et al.</title>
        <authorList>
            <person name="Bretzel G."/>
        </authorList>
    </citation>
    <scope>PROTEIN SEQUENCE</scope>
</reference>
<reference key="2">
    <citation type="journal article" date="1972" name="Hoppe-Seyler's Z. Physiol. Chem.">
        <title>Thynnin, the protamine of tuna fish: isolation and characterisation of the peptides obtained from thynnin Y2 by the action of thermolysin. X. Communications on the structure of protamines from the studies of Waldschmidt-Leitz and coworkers.</title>
        <authorList>
            <person name="Bretzel G."/>
        </authorList>
    </citation>
    <scope>PROTEIN SEQUENCE OF THERMOLYSIN PEPTIDES</scope>
</reference>
<feature type="peptide" id="PRO_0000044852" description="Protamine-Y1/Y2" evidence="2">
    <location>
        <begin position="1"/>
        <end position="34"/>
    </location>
</feature>
<feature type="region of interest" description="Disordered" evidence="1">
    <location>
        <begin position="1"/>
        <end position="34"/>
    </location>
</feature>
<feature type="sequence variant" description="In protamine-Y1.">
    <original>Q</original>
    <variation>E</variation>
    <location>
        <position position="6"/>
    </location>
</feature>
<organism>
    <name type="scientific">Thunnus thynnus</name>
    <name type="common">Atlantic bluefin tuna</name>
    <name type="synonym">Scomber thynnus</name>
    <dbReference type="NCBI Taxonomy" id="8237"/>
    <lineage>
        <taxon>Eukaryota</taxon>
        <taxon>Metazoa</taxon>
        <taxon>Chordata</taxon>
        <taxon>Craniata</taxon>
        <taxon>Vertebrata</taxon>
        <taxon>Euteleostomi</taxon>
        <taxon>Actinopterygii</taxon>
        <taxon>Neopterygii</taxon>
        <taxon>Teleostei</taxon>
        <taxon>Neoteleostei</taxon>
        <taxon>Acanthomorphata</taxon>
        <taxon>Pelagiaria</taxon>
        <taxon>Scombriformes</taxon>
        <taxon>Scombridae</taxon>
        <taxon>Thunnus</taxon>
    </lineage>
</organism>
<name>PRTY_THUTH</name>
<keyword id="KW-0158">Chromosome</keyword>
<keyword id="KW-0217">Developmental protein</keyword>
<keyword id="KW-0221">Differentiation</keyword>
<keyword id="KW-0903">Direct protein sequencing</keyword>
<keyword id="KW-0226">DNA condensation</keyword>
<keyword id="KW-0238">DNA-binding</keyword>
<keyword id="KW-0544">Nucleosome core</keyword>
<keyword id="KW-0539">Nucleus</keyword>
<keyword id="KW-0744">Spermatogenesis</keyword>
<evidence type="ECO:0000256" key="1">
    <source>
        <dbReference type="SAM" id="MobiDB-lite"/>
    </source>
</evidence>
<evidence type="ECO:0000269" key="2">
    <source>
    </source>
</evidence>
<comment type="function">
    <text>Protamines substitute for histones in the chromatin of sperm during the haploid phase of spermatogenesis. They compact sperm DNA into a highly condensed, stable and inactive complex.</text>
</comment>
<comment type="subcellular location">
    <subcellularLocation>
        <location>Nucleus</location>
    </subcellularLocation>
    <subcellularLocation>
        <location>Chromosome</location>
    </subcellularLocation>
</comment>
<comment type="tissue specificity">
    <text>Testis.</text>
</comment>
<comment type="miscellaneous">
    <text>The protamine-Y2 sequence is shown.</text>
</comment>
<protein>
    <recommendedName>
        <fullName>Protamine-Y1/Y2</fullName>
    </recommendedName>
    <alternativeName>
        <fullName>Thynnin-Y1/Y2</fullName>
    </alternativeName>
</protein>
<proteinExistence type="evidence at protein level"/>
<sequence>PRRRRQASRPVRRRRRYRRSTAARRRRRVVRRRR</sequence>
<dbReference type="PIR" id="A02663">
    <property type="entry name" value="TYTUY2"/>
</dbReference>
<dbReference type="GO" id="GO:0000786">
    <property type="term" value="C:nucleosome"/>
    <property type="evidence" value="ECO:0007669"/>
    <property type="project" value="UniProtKB-KW"/>
</dbReference>
<dbReference type="GO" id="GO:0005634">
    <property type="term" value="C:nucleus"/>
    <property type="evidence" value="ECO:0007669"/>
    <property type="project" value="UniProtKB-SubCell"/>
</dbReference>
<dbReference type="GO" id="GO:0003677">
    <property type="term" value="F:DNA binding"/>
    <property type="evidence" value="ECO:0007669"/>
    <property type="project" value="UniProtKB-KW"/>
</dbReference>
<dbReference type="GO" id="GO:0030154">
    <property type="term" value="P:cell differentiation"/>
    <property type="evidence" value="ECO:0007669"/>
    <property type="project" value="UniProtKB-KW"/>
</dbReference>
<dbReference type="GO" id="GO:0030261">
    <property type="term" value="P:chromosome condensation"/>
    <property type="evidence" value="ECO:0007669"/>
    <property type="project" value="UniProtKB-KW"/>
</dbReference>
<dbReference type="GO" id="GO:0007283">
    <property type="term" value="P:spermatogenesis"/>
    <property type="evidence" value="ECO:0007669"/>
    <property type="project" value="UniProtKB-KW"/>
</dbReference>
<accession>P02321</accession>